<sequence>MRITVLSGSDSPEREVSLVSGRAVQAALETLGHEVTMVDPGPDLPVRLLENPPDFVWIALHGDKGENGKLQGLLDWLGLPYNGSGVTASAIAMDKVVSKRLFVAEGIPTPAYRVAEAVPQVSECQAWLAALGSPVVVKPADGGSTVGVTIAREAGHLPEAVRLALQYSPQVLIEQYIPGQEITVALLDGLVLPAIEIVPQGRDFYDYEAKYAPGGSRHLIPPNLAADVLKASVDAAYRACRAVGSTGLVRADVRVDPEGRPWVLEVNTLPGMTATSLAPEAAQAAGIDFEQLIQRIIDRSLD</sequence>
<protein>
    <recommendedName>
        <fullName evidence="2">D-alanine--D-alanine ligase</fullName>
        <ecNumber evidence="2">6.3.2.4</ecNumber>
    </recommendedName>
    <alternativeName>
        <fullName evidence="2">D-Ala-D-Ala ligase</fullName>
    </alternativeName>
    <alternativeName>
        <fullName evidence="2">D-alanylalanine synthetase</fullName>
    </alternativeName>
</protein>
<evidence type="ECO:0000250" key="1"/>
<evidence type="ECO:0000255" key="2">
    <source>
        <dbReference type="HAMAP-Rule" id="MF_00047"/>
    </source>
</evidence>
<feature type="chain" id="PRO_0000177825" description="D-alanine--D-alanine ligase">
    <location>
        <begin position="1"/>
        <end position="302"/>
    </location>
</feature>
<feature type="domain" description="ATP-grasp" evidence="2">
    <location>
        <begin position="99"/>
        <end position="298"/>
    </location>
</feature>
<feature type="binding site" evidence="2">
    <location>
        <begin position="128"/>
        <end position="183"/>
    </location>
    <ligand>
        <name>ATP</name>
        <dbReference type="ChEBI" id="CHEBI:30616"/>
    </ligand>
</feature>
<feature type="binding site" evidence="2">
    <location>
        <position position="252"/>
    </location>
    <ligand>
        <name>Mg(2+)</name>
        <dbReference type="ChEBI" id="CHEBI:18420"/>
        <label>1</label>
    </ligand>
</feature>
<feature type="binding site" evidence="2">
    <location>
        <position position="265"/>
    </location>
    <ligand>
        <name>Mg(2+)</name>
        <dbReference type="ChEBI" id="CHEBI:18420"/>
        <label>1</label>
    </ligand>
</feature>
<feature type="binding site" evidence="2">
    <location>
        <position position="265"/>
    </location>
    <ligand>
        <name>Mg(2+)</name>
        <dbReference type="ChEBI" id="CHEBI:18420"/>
        <label>2</label>
    </ligand>
</feature>
<feature type="binding site" evidence="2">
    <location>
        <position position="267"/>
    </location>
    <ligand>
        <name>Mg(2+)</name>
        <dbReference type="ChEBI" id="CHEBI:18420"/>
        <label>2</label>
    </ligand>
</feature>
<comment type="function">
    <text evidence="2">Cell wall formation.</text>
</comment>
<comment type="catalytic activity">
    <reaction evidence="2">
        <text>2 D-alanine + ATP = D-alanyl-D-alanine + ADP + phosphate + H(+)</text>
        <dbReference type="Rhea" id="RHEA:11224"/>
        <dbReference type="ChEBI" id="CHEBI:15378"/>
        <dbReference type="ChEBI" id="CHEBI:30616"/>
        <dbReference type="ChEBI" id="CHEBI:43474"/>
        <dbReference type="ChEBI" id="CHEBI:57416"/>
        <dbReference type="ChEBI" id="CHEBI:57822"/>
        <dbReference type="ChEBI" id="CHEBI:456216"/>
        <dbReference type="EC" id="6.3.2.4"/>
    </reaction>
</comment>
<comment type="cofactor">
    <cofactor evidence="1">
        <name>Mg(2+)</name>
        <dbReference type="ChEBI" id="CHEBI:18420"/>
    </cofactor>
    <cofactor evidence="1">
        <name>Mn(2+)</name>
        <dbReference type="ChEBI" id="CHEBI:29035"/>
    </cofactor>
    <text evidence="1">Binds 2 magnesium or manganese ions per subunit.</text>
</comment>
<comment type="pathway">
    <text evidence="2">Cell wall biogenesis; peptidoglycan biosynthesis.</text>
</comment>
<comment type="subcellular location">
    <subcellularLocation>
        <location evidence="2">Cytoplasm</location>
    </subcellularLocation>
</comment>
<comment type="similarity">
    <text evidence="2">Belongs to the D-alanine--D-alanine ligase family.</text>
</comment>
<keyword id="KW-0067">ATP-binding</keyword>
<keyword id="KW-0133">Cell shape</keyword>
<keyword id="KW-0961">Cell wall biogenesis/degradation</keyword>
<keyword id="KW-0963">Cytoplasm</keyword>
<keyword id="KW-0436">Ligase</keyword>
<keyword id="KW-0460">Magnesium</keyword>
<keyword id="KW-0464">Manganese</keyword>
<keyword id="KW-0479">Metal-binding</keyword>
<keyword id="KW-0547">Nucleotide-binding</keyword>
<keyword id="KW-0573">Peptidoglycan synthesis</keyword>
<keyword id="KW-1185">Reference proteome</keyword>
<reference key="1">
    <citation type="journal article" date="2003" name="DNA Res.">
        <title>Complete genome structure of Gloeobacter violaceus PCC 7421, a cyanobacterium that lacks thylakoids.</title>
        <authorList>
            <person name="Nakamura Y."/>
            <person name="Kaneko T."/>
            <person name="Sato S."/>
            <person name="Mimuro M."/>
            <person name="Miyashita H."/>
            <person name="Tsuchiya T."/>
            <person name="Sasamoto S."/>
            <person name="Watanabe A."/>
            <person name="Kawashima K."/>
            <person name="Kishida Y."/>
            <person name="Kiyokawa C."/>
            <person name="Kohara M."/>
            <person name="Matsumoto M."/>
            <person name="Matsuno A."/>
            <person name="Nakazaki N."/>
            <person name="Shimpo S."/>
            <person name="Takeuchi C."/>
            <person name="Yamada M."/>
            <person name="Tabata S."/>
        </authorList>
    </citation>
    <scope>NUCLEOTIDE SEQUENCE [LARGE SCALE GENOMIC DNA]</scope>
    <source>
        <strain>ATCC 29082 / PCC 7421</strain>
    </source>
</reference>
<organism>
    <name type="scientific">Gloeobacter violaceus (strain ATCC 29082 / PCC 7421)</name>
    <dbReference type="NCBI Taxonomy" id="251221"/>
    <lineage>
        <taxon>Bacteria</taxon>
        <taxon>Bacillati</taxon>
        <taxon>Cyanobacteriota</taxon>
        <taxon>Cyanophyceae</taxon>
        <taxon>Gloeobacterales</taxon>
        <taxon>Gloeobacteraceae</taxon>
        <taxon>Gloeobacter</taxon>
    </lineage>
</organism>
<name>DDL_GLOVI</name>
<gene>
    <name evidence="2" type="primary">ddl</name>
    <name type="ordered locus">gll0297</name>
</gene>
<proteinExistence type="inferred from homology"/>
<accession>Q7NNW1</accession>
<dbReference type="EC" id="6.3.2.4" evidence="2"/>
<dbReference type="EMBL" id="BA000045">
    <property type="protein sequence ID" value="BAC88238.1"/>
    <property type="molecule type" value="Genomic_DNA"/>
</dbReference>
<dbReference type="RefSeq" id="NP_923243.1">
    <property type="nucleotide sequence ID" value="NC_005125.1"/>
</dbReference>
<dbReference type="RefSeq" id="WP_011140301.1">
    <property type="nucleotide sequence ID" value="NC_005125.1"/>
</dbReference>
<dbReference type="SMR" id="Q7NNW1"/>
<dbReference type="FunCoup" id="Q7NNW1">
    <property type="interactions" value="38"/>
</dbReference>
<dbReference type="STRING" id="251221.gene:10757769"/>
<dbReference type="EnsemblBacteria" id="BAC88238">
    <property type="protein sequence ID" value="BAC88238"/>
    <property type="gene ID" value="BAC88238"/>
</dbReference>
<dbReference type="KEGG" id="gvi:gll0297"/>
<dbReference type="PATRIC" id="fig|251221.4.peg.298"/>
<dbReference type="eggNOG" id="COG1181">
    <property type="taxonomic scope" value="Bacteria"/>
</dbReference>
<dbReference type="HOGENOM" id="CLU_039268_2_0_3"/>
<dbReference type="InParanoid" id="Q7NNW1"/>
<dbReference type="OrthoDB" id="9813261at2"/>
<dbReference type="PhylomeDB" id="Q7NNW1"/>
<dbReference type="UniPathway" id="UPA00219"/>
<dbReference type="Proteomes" id="UP000000557">
    <property type="component" value="Chromosome"/>
</dbReference>
<dbReference type="GO" id="GO:0005737">
    <property type="term" value="C:cytoplasm"/>
    <property type="evidence" value="ECO:0007669"/>
    <property type="project" value="UniProtKB-SubCell"/>
</dbReference>
<dbReference type="GO" id="GO:0005524">
    <property type="term" value="F:ATP binding"/>
    <property type="evidence" value="ECO:0007669"/>
    <property type="project" value="UniProtKB-KW"/>
</dbReference>
<dbReference type="GO" id="GO:0008716">
    <property type="term" value="F:D-alanine-D-alanine ligase activity"/>
    <property type="evidence" value="ECO:0000318"/>
    <property type="project" value="GO_Central"/>
</dbReference>
<dbReference type="GO" id="GO:0046872">
    <property type="term" value="F:metal ion binding"/>
    <property type="evidence" value="ECO:0007669"/>
    <property type="project" value="UniProtKB-KW"/>
</dbReference>
<dbReference type="GO" id="GO:0071555">
    <property type="term" value="P:cell wall organization"/>
    <property type="evidence" value="ECO:0007669"/>
    <property type="project" value="UniProtKB-KW"/>
</dbReference>
<dbReference type="GO" id="GO:0009252">
    <property type="term" value="P:peptidoglycan biosynthetic process"/>
    <property type="evidence" value="ECO:0007669"/>
    <property type="project" value="UniProtKB-UniRule"/>
</dbReference>
<dbReference type="GO" id="GO:0008360">
    <property type="term" value="P:regulation of cell shape"/>
    <property type="evidence" value="ECO:0007669"/>
    <property type="project" value="UniProtKB-KW"/>
</dbReference>
<dbReference type="Gene3D" id="3.40.50.20">
    <property type="match status" value="1"/>
</dbReference>
<dbReference type="Gene3D" id="3.30.1490.20">
    <property type="entry name" value="ATP-grasp fold, A domain"/>
    <property type="match status" value="1"/>
</dbReference>
<dbReference type="Gene3D" id="3.30.470.20">
    <property type="entry name" value="ATP-grasp fold, B domain"/>
    <property type="match status" value="1"/>
</dbReference>
<dbReference type="HAMAP" id="MF_00047">
    <property type="entry name" value="Dala_Dala_lig"/>
    <property type="match status" value="1"/>
</dbReference>
<dbReference type="InterPro" id="IPR011761">
    <property type="entry name" value="ATP-grasp"/>
</dbReference>
<dbReference type="InterPro" id="IPR013815">
    <property type="entry name" value="ATP_grasp_subdomain_1"/>
</dbReference>
<dbReference type="InterPro" id="IPR000291">
    <property type="entry name" value="D-Ala_lig_Van_CS"/>
</dbReference>
<dbReference type="InterPro" id="IPR005905">
    <property type="entry name" value="D_ala_D_ala"/>
</dbReference>
<dbReference type="InterPro" id="IPR011095">
    <property type="entry name" value="Dala_Dala_lig_C"/>
</dbReference>
<dbReference type="InterPro" id="IPR011127">
    <property type="entry name" value="Dala_Dala_lig_N"/>
</dbReference>
<dbReference type="InterPro" id="IPR016185">
    <property type="entry name" value="PreATP-grasp_dom_sf"/>
</dbReference>
<dbReference type="NCBIfam" id="TIGR01205">
    <property type="entry name" value="D_ala_D_alaTIGR"/>
    <property type="match status" value="1"/>
</dbReference>
<dbReference type="NCBIfam" id="NF002378">
    <property type="entry name" value="PRK01372.1"/>
    <property type="match status" value="1"/>
</dbReference>
<dbReference type="PANTHER" id="PTHR23132">
    <property type="entry name" value="D-ALANINE--D-ALANINE LIGASE"/>
    <property type="match status" value="1"/>
</dbReference>
<dbReference type="PANTHER" id="PTHR23132:SF23">
    <property type="entry name" value="D-ALANINE--D-ALANINE LIGASE B"/>
    <property type="match status" value="1"/>
</dbReference>
<dbReference type="Pfam" id="PF07478">
    <property type="entry name" value="Dala_Dala_lig_C"/>
    <property type="match status" value="1"/>
</dbReference>
<dbReference type="Pfam" id="PF01820">
    <property type="entry name" value="Dala_Dala_lig_N"/>
    <property type="match status" value="1"/>
</dbReference>
<dbReference type="PIRSF" id="PIRSF039102">
    <property type="entry name" value="Ddl/VanB"/>
    <property type="match status" value="1"/>
</dbReference>
<dbReference type="SMART" id="SM01209">
    <property type="entry name" value="GARS_A"/>
    <property type="match status" value="1"/>
</dbReference>
<dbReference type="SUPFAM" id="SSF56059">
    <property type="entry name" value="Glutathione synthetase ATP-binding domain-like"/>
    <property type="match status" value="1"/>
</dbReference>
<dbReference type="SUPFAM" id="SSF52440">
    <property type="entry name" value="PreATP-grasp domain"/>
    <property type="match status" value="1"/>
</dbReference>
<dbReference type="PROSITE" id="PS50975">
    <property type="entry name" value="ATP_GRASP"/>
    <property type="match status" value="1"/>
</dbReference>
<dbReference type="PROSITE" id="PS00843">
    <property type="entry name" value="DALA_DALA_LIGASE_1"/>
    <property type="match status" value="1"/>
</dbReference>
<dbReference type="PROSITE" id="PS00844">
    <property type="entry name" value="DALA_DALA_LIGASE_2"/>
    <property type="match status" value="1"/>
</dbReference>